<evidence type="ECO:0000255" key="1">
    <source>
        <dbReference type="HAMAP-Rule" id="MF_00040"/>
    </source>
</evidence>
<name>RRF_MYCM1</name>
<comment type="function">
    <text evidence="1">Responsible for the release of ribosomes from messenger RNA at the termination of protein biosynthesis. May increase the efficiency of translation by recycling ribosomes from one round of translation to another.</text>
</comment>
<comment type="subcellular location">
    <subcellularLocation>
        <location evidence="1">Cytoplasm</location>
    </subcellularLocation>
</comment>
<comment type="similarity">
    <text evidence="1">Belongs to the RRF family.</text>
</comment>
<organism>
    <name type="scientific">Mycoplasma mobile (strain ATCC 43663 / 163K / NCTC 11711)</name>
    <name type="common">Mesomycoplasma mobile</name>
    <dbReference type="NCBI Taxonomy" id="267748"/>
    <lineage>
        <taxon>Bacteria</taxon>
        <taxon>Bacillati</taxon>
        <taxon>Mycoplasmatota</taxon>
        <taxon>Mycoplasmoidales</taxon>
        <taxon>Metamycoplasmataceae</taxon>
        <taxon>Mesomycoplasma</taxon>
    </lineage>
</organism>
<sequence>MELNFYTNKVKLEMEKAVQTYSNQIAKISAGKANPKLISGIKFIYYDEPMSIEEMAAISVPEAQQILIKPYDIKTTKNIIESLNKMNYDMQIVDEGAQVRLKFPALTTERRKELVKQLVKLNESAKVAIRQVRQDENKLIKKDEELSEDEQKKYLDEIQKLTDKYIFKIEELNKDKEKELMTI</sequence>
<feature type="chain" id="PRO_0000167494" description="Ribosome-recycling factor">
    <location>
        <begin position="1"/>
        <end position="183"/>
    </location>
</feature>
<keyword id="KW-0963">Cytoplasm</keyword>
<keyword id="KW-0648">Protein biosynthesis</keyword>
<keyword id="KW-1185">Reference proteome</keyword>
<reference key="1">
    <citation type="journal article" date="2004" name="Genome Res.">
        <title>The complete genome and proteome of Mycoplasma mobile.</title>
        <authorList>
            <person name="Jaffe J.D."/>
            <person name="Stange-Thomann N."/>
            <person name="Smith C."/>
            <person name="DeCaprio D."/>
            <person name="Fisher S."/>
            <person name="Butler J."/>
            <person name="Calvo S."/>
            <person name="Elkins T."/>
            <person name="FitzGerald M.G."/>
            <person name="Hafez N."/>
            <person name="Kodira C.D."/>
            <person name="Major J."/>
            <person name="Wang S."/>
            <person name="Wilkinson J."/>
            <person name="Nicol R."/>
            <person name="Nusbaum C."/>
            <person name="Birren B."/>
            <person name="Berg H.C."/>
            <person name="Church G.M."/>
        </authorList>
    </citation>
    <scope>NUCLEOTIDE SEQUENCE [LARGE SCALE GENOMIC DNA]</scope>
    <source>
        <strain>ATCC 43663 / NCTC 11711 / 163 K</strain>
    </source>
</reference>
<protein>
    <recommendedName>
        <fullName evidence="1">Ribosome-recycling factor</fullName>
        <shortName evidence="1">RRF</shortName>
    </recommendedName>
    <alternativeName>
        <fullName evidence="1">Ribosome-releasing factor</fullName>
    </alternativeName>
</protein>
<proteinExistence type="inferred from homology"/>
<dbReference type="EMBL" id="AE017308">
    <property type="protein sequence ID" value="AAT27541.1"/>
    <property type="molecule type" value="Genomic_DNA"/>
</dbReference>
<dbReference type="RefSeq" id="WP_011264575.1">
    <property type="nucleotide sequence ID" value="NC_006908.1"/>
</dbReference>
<dbReference type="SMR" id="Q6KIN5"/>
<dbReference type="STRING" id="267748.MMOB0550"/>
<dbReference type="KEGG" id="mmo:MMOB0550"/>
<dbReference type="eggNOG" id="COG0233">
    <property type="taxonomic scope" value="Bacteria"/>
</dbReference>
<dbReference type="HOGENOM" id="CLU_073981_2_1_14"/>
<dbReference type="OrthoDB" id="9804006at2"/>
<dbReference type="Proteomes" id="UP000009072">
    <property type="component" value="Chromosome"/>
</dbReference>
<dbReference type="GO" id="GO:0005737">
    <property type="term" value="C:cytoplasm"/>
    <property type="evidence" value="ECO:0007669"/>
    <property type="project" value="UniProtKB-SubCell"/>
</dbReference>
<dbReference type="GO" id="GO:0043023">
    <property type="term" value="F:ribosomal large subunit binding"/>
    <property type="evidence" value="ECO:0007669"/>
    <property type="project" value="TreeGrafter"/>
</dbReference>
<dbReference type="GO" id="GO:0006415">
    <property type="term" value="P:translational termination"/>
    <property type="evidence" value="ECO:0007669"/>
    <property type="project" value="UniProtKB-UniRule"/>
</dbReference>
<dbReference type="FunFam" id="1.10.132.20:FF:000001">
    <property type="entry name" value="Ribosome-recycling factor"/>
    <property type="match status" value="1"/>
</dbReference>
<dbReference type="Gene3D" id="3.30.1360.40">
    <property type="match status" value="1"/>
</dbReference>
<dbReference type="Gene3D" id="1.10.132.20">
    <property type="entry name" value="Ribosome-recycling factor"/>
    <property type="match status" value="1"/>
</dbReference>
<dbReference type="HAMAP" id="MF_00040">
    <property type="entry name" value="RRF"/>
    <property type="match status" value="1"/>
</dbReference>
<dbReference type="InterPro" id="IPR002661">
    <property type="entry name" value="Ribosome_recyc_fac"/>
</dbReference>
<dbReference type="InterPro" id="IPR023584">
    <property type="entry name" value="Ribosome_recyc_fac_dom"/>
</dbReference>
<dbReference type="InterPro" id="IPR036191">
    <property type="entry name" value="RRF_sf"/>
</dbReference>
<dbReference type="NCBIfam" id="TIGR00496">
    <property type="entry name" value="frr"/>
    <property type="match status" value="1"/>
</dbReference>
<dbReference type="PANTHER" id="PTHR20982:SF3">
    <property type="entry name" value="MITOCHONDRIAL RIBOSOME RECYCLING FACTOR PSEUDO 1"/>
    <property type="match status" value="1"/>
</dbReference>
<dbReference type="PANTHER" id="PTHR20982">
    <property type="entry name" value="RIBOSOME RECYCLING FACTOR"/>
    <property type="match status" value="1"/>
</dbReference>
<dbReference type="Pfam" id="PF01765">
    <property type="entry name" value="RRF"/>
    <property type="match status" value="1"/>
</dbReference>
<dbReference type="SUPFAM" id="SSF55194">
    <property type="entry name" value="Ribosome recycling factor, RRF"/>
    <property type="match status" value="1"/>
</dbReference>
<accession>Q6KIN5</accession>
<gene>
    <name evidence="1" type="primary">frr</name>
    <name type="ordered locus">MMOB0550</name>
</gene>